<comment type="function">
    <text evidence="1">Core subunit of the mitochondrial membrane respiratory chain NADH dehydrogenase (Complex I) which catalyzes electron transfer from NADH through the respiratory chain, using ubiquinone as an electron acceptor. Part of the enzyme membrane arm which is embedded in the lipid bilayer and involved in proton translocation.</text>
</comment>
<comment type="catalytic activity">
    <reaction evidence="1">
        <text>a ubiquinone + NADH + 5 H(+)(in) = a ubiquinol + NAD(+) + 4 H(+)(out)</text>
        <dbReference type="Rhea" id="RHEA:29091"/>
        <dbReference type="Rhea" id="RHEA-COMP:9565"/>
        <dbReference type="Rhea" id="RHEA-COMP:9566"/>
        <dbReference type="ChEBI" id="CHEBI:15378"/>
        <dbReference type="ChEBI" id="CHEBI:16389"/>
        <dbReference type="ChEBI" id="CHEBI:17976"/>
        <dbReference type="ChEBI" id="CHEBI:57540"/>
        <dbReference type="ChEBI" id="CHEBI:57945"/>
        <dbReference type="EC" id="7.1.1.2"/>
    </reaction>
    <physiologicalReaction direction="left-to-right" evidence="1">
        <dbReference type="Rhea" id="RHEA:29092"/>
    </physiologicalReaction>
</comment>
<comment type="subunit">
    <text evidence="2">Core subunit of respiratory chain NADH dehydrogenase (Complex I) which is composed of 45 different subunits.</text>
</comment>
<comment type="subcellular location">
    <subcellularLocation>
        <location evidence="2">Mitochondrion inner membrane</location>
        <topology evidence="3">Multi-pass membrane protein</topology>
    </subcellularLocation>
</comment>
<comment type="similarity">
    <text evidence="4">Belongs to the complex I subunit 4L family.</text>
</comment>
<organism>
    <name type="scientific">Prolemur simus</name>
    <name type="common">Greater bamboo lemur</name>
    <name type="synonym">Hapalemur simus</name>
    <dbReference type="NCBI Taxonomy" id="1328070"/>
    <lineage>
        <taxon>Eukaryota</taxon>
        <taxon>Metazoa</taxon>
        <taxon>Chordata</taxon>
        <taxon>Craniata</taxon>
        <taxon>Vertebrata</taxon>
        <taxon>Euteleostomi</taxon>
        <taxon>Mammalia</taxon>
        <taxon>Eutheria</taxon>
        <taxon>Euarchontoglires</taxon>
        <taxon>Primates</taxon>
        <taxon>Strepsirrhini</taxon>
        <taxon>Lemuriformes</taxon>
        <taxon>Lemuridae</taxon>
        <taxon>Prolemur</taxon>
    </lineage>
</organism>
<name>NU4LM_PROSS</name>
<evidence type="ECO:0000250" key="1">
    <source>
        <dbReference type="UniProtKB" id="P03901"/>
    </source>
</evidence>
<evidence type="ECO:0000250" key="2">
    <source>
        <dbReference type="UniProtKB" id="P03902"/>
    </source>
</evidence>
<evidence type="ECO:0000255" key="3"/>
<evidence type="ECO:0000305" key="4"/>
<feature type="chain" id="PRO_0000118428" description="NADH-ubiquinone oxidoreductase chain 4L">
    <location>
        <begin position="1"/>
        <end position="98"/>
    </location>
</feature>
<feature type="transmembrane region" description="Helical" evidence="3">
    <location>
        <begin position="2"/>
        <end position="22"/>
    </location>
</feature>
<feature type="transmembrane region" description="Helical" evidence="3">
    <location>
        <begin position="29"/>
        <end position="49"/>
    </location>
</feature>
<feature type="transmembrane region" description="Helical" evidence="3">
    <location>
        <begin position="61"/>
        <end position="81"/>
    </location>
</feature>
<proteinExistence type="inferred from homology"/>
<dbReference type="EC" id="7.1.1.2"/>
<dbReference type="EMBL" id="AF224583">
    <property type="protein sequence ID" value="AAN64783.1"/>
    <property type="molecule type" value="Genomic_DNA"/>
</dbReference>
<dbReference type="EMBL" id="AF224584">
    <property type="protein sequence ID" value="AAN64787.1"/>
    <property type="molecule type" value="Genomic_DNA"/>
</dbReference>
<dbReference type="EMBL" id="AY582547">
    <property type="protein sequence ID" value="AAT35852.1"/>
    <property type="molecule type" value="Genomic_DNA"/>
</dbReference>
<dbReference type="EMBL" id="AY582548">
    <property type="protein sequence ID" value="AAT35855.1"/>
    <property type="molecule type" value="Genomic_DNA"/>
</dbReference>
<dbReference type="SMR" id="Q8HC87"/>
<dbReference type="Proteomes" id="UP000694414">
    <property type="component" value="Unplaced"/>
</dbReference>
<dbReference type="GO" id="GO:0005743">
    <property type="term" value="C:mitochondrial inner membrane"/>
    <property type="evidence" value="ECO:0000250"/>
    <property type="project" value="UniProtKB"/>
</dbReference>
<dbReference type="GO" id="GO:0045271">
    <property type="term" value="C:respiratory chain complex I"/>
    <property type="evidence" value="ECO:0000250"/>
    <property type="project" value="UniProtKB"/>
</dbReference>
<dbReference type="GO" id="GO:0008137">
    <property type="term" value="F:NADH dehydrogenase (ubiquinone) activity"/>
    <property type="evidence" value="ECO:0000250"/>
    <property type="project" value="UniProtKB"/>
</dbReference>
<dbReference type="GO" id="GO:0042773">
    <property type="term" value="P:ATP synthesis coupled electron transport"/>
    <property type="evidence" value="ECO:0007669"/>
    <property type="project" value="InterPro"/>
</dbReference>
<dbReference type="FunFam" id="1.10.287.3510:FF:000002">
    <property type="entry name" value="NADH-ubiquinone oxidoreductase chain 4L"/>
    <property type="match status" value="1"/>
</dbReference>
<dbReference type="Gene3D" id="1.10.287.3510">
    <property type="match status" value="1"/>
</dbReference>
<dbReference type="InterPro" id="IPR001133">
    <property type="entry name" value="NADH_UbQ_OxRdtase_chain4L/K"/>
</dbReference>
<dbReference type="InterPro" id="IPR039428">
    <property type="entry name" value="NUOK/Mnh_C1-like"/>
</dbReference>
<dbReference type="PANTHER" id="PTHR11434:SF0">
    <property type="entry name" value="NADH-UBIQUINONE OXIDOREDUCTASE CHAIN 4L"/>
    <property type="match status" value="1"/>
</dbReference>
<dbReference type="PANTHER" id="PTHR11434">
    <property type="entry name" value="NADH-UBIQUINONE OXIDOREDUCTASE SUBUNIT ND4L"/>
    <property type="match status" value="1"/>
</dbReference>
<dbReference type="Pfam" id="PF00420">
    <property type="entry name" value="Oxidored_q2"/>
    <property type="match status" value="1"/>
</dbReference>
<geneLocation type="mitochondrion"/>
<accession>Q8HC87</accession>
<accession>Q05FD3</accession>
<sequence>MPSISTNIILAFITALLGMLIFRSHLMSSLLCLEGMMLSMFILSTLTILSLHFTTSFMMPILLLVFAACEAAVGLALLVTVSNTYGLDYIQNLNLLQC</sequence>
<protein>
    <recommendedName>
        <fullName>NADH-ubiquinone oxidoreductase chain 4L</fullName>
        <ecNumber>7.1.1.2</ecNumber>
    </recommendedName>
    <alternativeName>
        <fullName>NADH dehydrogenase subunit 4L</fullName>
    </alternativeName>
</protein>
<keyword id="KW-0249">Electron transport</keyword>
<keyword id="KW-0472">Membrane</keyword>
<keyword id="KW-0496">Mitochondrion</keyword>
<keyword id="KW-0999">Mitochondrion inner membrane</keyword>
<keyword id="KW-0520">NAD</keyword>
<keyword id="KW-1185">Reference proteome</keyword>
<keyword id="KW-0679">Respiratory chain</keyword>
<keyword id="KW-1278">Translocase</keyword>
<keyword id="KW-0812">Transmembrane</keyword>
<keyword id="KW-1133">Transmembrane helix</keyword>
<keyword id="KW-0813">Transport</keyword>
<keyword id="KW-0830">Ubiquinone</keyword>
<gene>
    <name type="primary">MT-ND4L</name>
    <name type="synonym">MTND4L</name>
    <name type="synonym">NADH4L</name>
    <name type="synonym">ND4L</name>
</gene>
<reference key="1">
    <citation type="journal article" date="2003" name="Proc. Natl. Acad. Sci. U.S.A.">
        <title>A molecular approach to comparative phylogeography of extant Malagasy lemurs.</title>
        <authorList>
            <person name="Pastorini J."/>
            <person name="Thalmann U."/>
            <person name="Martin R.D."/>
        </authorList>
    </citation>
    <scope>NUCLEOTIDE SEQUENCE [GENOMIC DNA]</scope>
    <source>
        <strain>Isolate JP127</strain>
        <strain>Isolate JP128</strain>
    </source>
</reference>
<reference key="2">
    <citation type="journal article" date="2006" name="Int. J. Primatol.">
        <title>Revision of the mouse lemurs (Microcebus) of Eastern Madagascar.</title>
        <authorList>
            <person name="Louis E.E. Jr."/>
            <person name="Coles M.S."/>
            <person name="Andriantompohavana R."/>
            <person name="Sommer J.A."/>
            <person name="Engberg S.E."/>
            <person name="Zaonarivelo J.R."/>
            <person name="Mayor M.I."/>
            <person name="Brenneman R.A."/>
        </authorList>
    </citation>
    <scope>NUCLEOTIDE SEQUENCE [GENOMIC DNA]</scope>
    <source>
        <strain>Isolate KIAN124</strain>
        <strain>Isolate RANO338</strain>
    </source>
</reference>